<gene>
    <name evidence="1" type="primary">rny</name>
    <name type="ordered locus">MPN_269</name>
    <name type="ORF">A65_orf493</name>
    <name type="ORF">MP564</name>
</gene>
<reference key="1">
    <citation type="journal article" date="1996" name="Nucleic Acids Res.">
        <title>Complete sequence analysis of the genome of the bacterium Mycoplasma pneumoniae.</title>
        <authorList>
            <person name="Himmelreich R."/>
            <person name="Hilbert H."/>
            <person name="Plagens H."/>
            <person name="Pirkl E."/>
            <person name="Li B.-C."/>
            <person name="Herrmann R."/>
        </authorList>
    </citation>
    <scope>NUCLEOTIDE SEQUENCE [LARGE SCALE GENOMIC DNA]</scope>
    <source>
        <strain>ATCC 29342 / M129 / Subtype 1</strain>
    </source>
</reference>
<proteinExistence type="inferred from homology"/>
<protein>
    <recommendedName>
        <fullName evidence="1">Ribonuclease Y</fullName>
        <shortName evidence="1">RNase Y</shortName>
        <ecNumber evidence="1">3.1.-.-</ecNumber>
    </recommendedName>
</protein>
<comment type="function">
    <text evidence="1">Endoribonuclease that initiates mRNA decay.</text>
</comment>
<comment type="subcellular location">
    <subcellularLocation>
        <location evidence="1">Cell membrane</location>
        <topology evidence="1">Single-pass membrane protein</topology>
    </subcellularLocation>
</comment>
<comment type="similarity">
    <text evidence="1">Belongs to the RNase Y family.</text>
</comment>
<organism>
    <name type="scientific">Mycoplasma pneumoniae (strain ATCC 29342 / M129 / Subtype 1)</name>
    <name type="common">Mycoplasmoides pneumoniae</name>
    <dbReference type="NCBI Taxonomy" id="272634"/>
    <lineage>
        <taxon>Bacteria</taxon>
        <taxon>Bacillati</taxon>
        <taxon>Mycoplasmatota</taxon>
        <taxon>Mycoplasmoidales</taxon>
        <taxon>Mycoplasmoidaceae</taxon>
        <taxon>Mycoplasmoides</taxon>
    </lineage>
</organism>
<evidence type="ECO:0000255" key="1">
    <source>
        <dbReference type="HAMAP-Rule" id="MF_00335"/>
    </source>
</evidence>
<evidence type="ECO:0000255" key="2">
    <source>
        <dbReference type="PROSITE-ProRule" id="PRU01175"/>
    </source>
</evidence>
<sequence length="493" mass="56527">MSAKLTLESIAKTFAETSIFAILFLIIVILNLGLLVFLAYQYRVYKKKQRANLTKQTYNNDYGQIVNLKQQNGAKIKELANLKDQLSELGQKFNTTLSEIINKPLVNVIDEYLDEQFKQAANFREAELNAVLDSNDQKTVFHKRLFNKFHFGVDKLANINVKNPLNLCWVDSASFTVIESDFRKLNGVGGINKKLLIEKLRIEDIIFTNIDKKYYEVQILSDSPVKVQKTVLTIRNILINDYVDNEKIESYAREANGYFNDHCKLIGKQVLERLNIFEISPKLHKFFGLLAFRYSFGQNVLSHCLETGFLTAYLALLVNFKPDVALKCGLYHDIGKADDENGKKNHTVTGAKIGDEFYFENDVKYTIANHHNKNVDNVYCRLTQIGDKLSAGRLGARSDSSVLFSQLKQELKQIVEETLAQFKTTILLGQSGRRLVIWLETNQHNNIIDNQQLTDLATTIKSKIVQNNITNRFPIKVVLRYNFEHSFDTKDKN</sequence>
<name>RNY_MYCPN</name>
<keyword id="KW-1003">Cell membrane</keyword>
<keyword id="KW-0255">Endonuclease</keyword>
<keyword id="KW-0378">Hydrolase</keyword>
<keyword id="KW-0472">Membrane</keyword>
<keyword id="KW-0540">Nuclease</keyword>
<keyword id="KW-1185">Reference proteome</keyword>
<keyword id="KW-0694">RNA-binding</keyword>
<keyword id="KW-0812">Transmembrane</keyword>
<keyword id="KW-1133">Transmembrane helix</keyword>
<accession>P75506</accession>
<feature type="chain" id="PRO_0000163784" description="Ribonuclease Y">
    <location>
        <begin position="1"/>
        <end position="493"/>
    </location>
</feature>
<feature type="transmembrane region" description="Helical" evidence="1">
    <location>
        <begin position="19"/>
        <end position="39"/>
    </location>
</feature>
<feature type="domain" description="KH" evidence="1">
    <location>
        <begin position="172"/>
        <end position="241"/>
    </location>
</feature>
<feature type="domain" description="HD" evidence="2">
    <location>
        <begin position="300"/>
        <end position="392"/>
    </location>
</feature>
<dbReference type="EC" id="3.1.-.-" evidence="1"/>
<dbReference type="EMBL" id="U00089">
    <property type="protein sequence ID" value="AAB96212.1"/>
    <property type="molecule type" value="Genomic_DNA"/>
</dbReference>
<dbReference type="PIR" id="S73890">
    <property type="entry name" value="S73890"/>
</dbReference>
<dbReference type="RefSeq" id="NP_109957.1">
    <property type="nucleotide sequence ID" value="NC_000912.1"/>
</dbReference>
<dbReference type="RefSeq" id="WP_010874626.1">
    <property type="nucleotide sequence ID" value="NZ_OU342337.1"/>
</dbReference>
<dbReference type="IntAct" id="P75506">
    <property type="interactions" value="7"/>
</dbReference>
<dbReference type="STRING" id="272634.MPN_269"/>
<dbReference type="EnsemblBacteria" id="AAB96212">
    <property type="protein sequence ID" value="AAB96212"/>
    <property type="gene ID" value="MPN_269"/>
</dbReference>
<dbReference type="KEGG" id="mpn:MPN_269"/>
<dbReference type="PATRIC" id="fig|272634.6.peg.288"/>
<dbReference type="HOGENOM" id="CLU_563624_0_0_14"/>
<dbReference type="OrthoDB" id="9803205at2"/>
<dbReference type="BioCyc" id="MPNE272634:G1GJ3-420-MONOMER"/>
<dbReference type="Proteomes" id="UP000000808">
    <property type="component" value="Chromosome"/>
</dbReference>
<dbReference type="GO" id="GO:0005886">
    <property type="term" value="C:plasma membrane"/>
    <property type="evidence" value="ECO:0007669"/>
    <property type="project" value="UniProtKB-SubCell"/>
</dbReference>
<dbReference type="GO" id="GO:0003723">
    <property type="term" value="F:RNA binding"/>
    <property type="evidence" value="ECO:0007669"/>
    <property type="project" value="UniProtKB-UniRule"/>
</dbReference>
<dbReference type="GO" id="GO:0004521">
    <property type="term" value="F:RNA endonuclease activity"/>
    <property type="evidence" value="ECO:0007669"/>
    <property type="project" value="UniProtKB-UniRule"/>
</dbReference>
<dbReference type="GO" id="GO:0006402">
    <property type="term" value="P:mRNA catabolic process"/>
    <property type="evidence" value="ECO:0007669"/>
    <property type="project" value="UniProtKB-UniRule"/>
</dbReference>
<dbReference type="CDD" id="cd00077">
    <property type="entry name" value="HDc"/>
    <property type="match status" value="1"/>
</dbReference>
<dbReference type="Gene3D" id="1.10.3210.10">
    <property type="entry name" value="Hypothetical protein af1432"/>
    <property type="match status" value="1"/>
</dbReference>
<dbReference type="HAMAP" id="MF_00335">
    <property type="entry name" value="RNase_Y"/>
    <property type="match status" value="1"/>
</dbReference>
<dbReference type="InterPro" id="IPR003607">
    <property type="entry name" value="HD/PDEase_dom"/>
</dbReference>
<dbReference type="InterPro" id="IPR006674">
    <property type="entry name" value="HD_domain"/>
</dbReference>
<dbReference type="InterPro" id="IPR006675">
    <property type="entry name" value="HDIG_dom"/>
</dbReference>
<dbReference type="InterPro" id="IPR017705">
    <property type="entry name" value="Ribonuclease_Y"/>
</dbReference>
<dbReference type="InterPro" id="IPR052340">
    <property type="entry name" value="RNase_Y/CdgJ"/>
</dbReference>
<dbReference type="NCBIfam" id="TIGR00277">
    <property type="entry name" value="HDIG"/>
    <property type="match status" value="1"/>
</dbReference>
<dbReference type="NCBIfam" id="NF009346">
    <property type="entry name" value="PRK12705.1-3"/>
    <property type="match status" value="1"/>
</dbReference>
<dbReference type="PANTHER" id="PTHR33525">
    <property type="match status" value="1"/>
</dbReference>
<dbReference type="PANTHER" id="PTHR33525:SF3">
    <property type="entry name" value="RIBONUCLEASE Y"/>
    <property type="match status" value="1"/>
</dbReference>
<dbReference type="Pfam" id="PF01966">
    <property type="entry name" value="HD"/>
    <property type="match status" value="1"/>
</dbReference>
<dbReference type="SMART" id="SM00471">
    <property type="entry name" value="HDc"/>
    <property type="match status" value="1"/>
</dbReference>
<dbReference type="SUPFAM" id="SSF109604">
    <property type="entry name" value="HD-domain/PDEase-like"/>
    <property type="match status" value="1"/>
</dbReference>
<dbReference type="PROSITE" id="PS51831">
    <property type="entry name" value="HD"/>
    <property type="match status" value="1"/>
</dbReference>